<keyword id="KW-1185">Reference proteome</keyword>
<keyword id="KW-0687">Ribonucleoprotein</keyword>
<keyword id="KW-0689">Ribosomal protein</keyword>
<keyword id="KW-0694">RNA-binding</keyword>
<keyword id="KW-0699">rRNA-binding</keyword>
<organism>
    <name type="scientific">Aeropyrum pernix (strain ATCC 700893 / DSM 11879 / JCM 9820 / NBRC 100138 / K1)</name>
    <dbReference type="NCBI Taxonomy" id="272557"/>
    <lineage>
        <taxon>Archaea</taxon>
        <taxon>Thermoproteota</taxon>
        <taxon>Thermoprotei</taxon>
        <taxon>Desulfurococcales</taxon>
        <taxon>Desulfurococcaceae</taxon>
        <taxon>Aeropyrum</taxon>
    </lineage>
</organism>
<comment type="function">
    <text evidence="1">Forms part of the ribosomal stalk, playing a central role in the interaction of the ribosome with GTP-bound translation factors.</text>
</comment>
<comment type="subunit">
    <text evidence="1">Part of the 50S ribosomal subunit. Forms part of the ribosomal stalk which helps the ribosome interact with GTP-bound translation factors. Forms a heptameric L10(L12)2(L12)2(L12)2 complex, where L10 forms an elongated spine to which the L12 dimers bind in a sequential fashion.</text>
</comment>
<comment type="similarity">
    <text evidence="1">Belongs to the universal ribosomal protein uL10 family.</text>
</comment>
<sequence length="341" mass="37273">MSLVGQMYKREKPIPEWKTLMLRELEELFSKHRVVLFADLTGTPTFVVQRVRKKLWKKYPMMVAKKRIILRAMKAAGLELDDNLLDDLVRGQMLLVFADGNPFKIVKEVEKEKVAMPVKPGDKAETEIRIPEGMTNLTPGPILSVFGKLRIQYQVRGGKIYIAKETVVAKPGDVISEDLAGLLMALGIRPIEKGVRVKFAIDGGVLITEDLLRPDIEAFRGDVIDAAKEALGLATEIVYMPVPEAVESAIVKAALAASALAAETGFIAPGTVEDVVRKAIAEEAAVVALLGDKARELGIEEAAPAAAPAAEEKAEEEKKEEEEEKKEDQELSGLDSIFGGF</sequence>
<protein>
    <recommendedName>
        <fullName evidence="1">Large ribosomal subunit protein uL10</fullName>
    </recommendedName>
    <alternativeName>
        <fullName evidence="3">50S ribosomal protein L10</fullName>
    </alternativeName>
    <alternativeName>
        <fullName evidence="1">Acidic ribosomal protein P0 homolog</fullName>
    </alternativeName>
</protein>
<proteinExistence type="inferred from homology"/>
<evidence type="ECO:0000255" key="1">
    <source>
        <dbReference type="HAMAP-Rule" id="MF_00280"/>
    </source>
</evidence>
<evidence type="ECO:0000256" key="2">
    <source>
        <dbReference type="SAM" id="MobiDB-lite"/>
    </source>
</evidence>
<evidence type="ECO:0000305" key="3"/>
<dbReference type="EMBL" id="BA000002">
    <property type="protein sequence ID" value="BAA81182.2"/>
    <property type="molecule type" value="Genomic_DNA"/>
</dbReference>
<dbReference type="PIR" id="F72524">
    <property type="entry name" value="F72524"/>
</dbReference>
<dbReference type="RefSeq" id="WP_010866841.1">
    <property type="nucleotide sequence ID" value="NC_000854.2"/>
</dbReference>
<dbReference type="SMR" id="Q9Y9W8"/>
<dbReference type="STRING" id="272557.APE_2171.1"/>
<dbReference type="EnsemblBacteria" id="BAA81182">
    <property type="protein sequence ID" value="BAA81182"/>
    <property type="gene ID" value="APE_2171.1"/>
</dbReference>
<dbReference type="GeneID" id="1445238"/>
<dbReference type="KEGG" id="ape:APE_2171.1"/>
<dbReference type="PATRIC" id="fig|272557.25.peg.1448"/>
<dbReference type="eggNOG" id="arCOG04288">
    <property type="taxonomic scope" value="Archaea"/>
</dbReference>
<dbReference type="Proteomes" id="UP000002518">
    <property type="component" value="Chromosome"/>
</dbReference>
<dbReference type="GO" id="GO:0022625">
    <property type="term" value="C:cytosolic large ribosomal subunit"/>
    <property type="evidence" value="ECO:0007669"/>
    <property type="project" value="TreeGrafter"/>
</dbReference>
<dbReference type="GO" id="GO:0070180">
    <property type="term" value="F:large ribosomal subunit rRNA binding"/>
    <property type="evidence" value="ECO:0007669"/>
    <property type="project" value="UniProtKB-UniRule"/>
</dbReference>
<dbReference type="GO" id="GO:0003735">
    <property type="term" value="F:structural constituent of ribosome"/>
    <property type="evidence" value="ECO:0007669"/>
    <property type="project" value="TreeGrafter"/>
</dbReference>
<dbReference type="GO" id="GO:0002181">
    <property type="term" value="P:cytoplasmic translation"/>
    <property type="evidence" value="ECO:0007669"/>
    <property type="project" value="TreeGrafter"/>
</dbReference>
<dbReference type="GO" id="GO:0000027">
    <property type="term" value="P:ribosomal large subunit assembly"/>
    <property type="evidence" value="ECO:0007669"/>
    <property type="project" value="TreeGrafter"/>
</dbReference>
<dbReference type="Gene3D" id="3.30.70.1730">
    <property type="match status" value="1"/>
</dbReference>
<dbReference type="Gene3D" id="3.90.105.20">
    <property type="match status" value="1"/>
</dbReference>
<dbReference type="Gene3D" id="6.10.140.760">
    <property type="match status" value="1"/>
</dbReference>
<dbReference type="HAMAP" id="MF_00280">
    <property type="entry name" value="Ribosomal_uL10_arch"/>
    <property type="match status" value="1"/>
</dbReference>
<dbReference type="InterPro" id="IPR050323">
    <property type="entry name" value="Ribosomal_protein_uL10"/>
</dbReference>
<dbReference type="InterPro" id="IPR001790">
    <property type="entry name" value="Ribosomal_uL10"/>
</dbReference>
<dbReference type="InterPro" id="IPR040637">
    <property type="entry name" value="Ribosomal_uL10-like_insert"/>
</dbReference>
<dbReference type="InterPro" id="IPR043164">
    <property type="entry name" value="Ribosomal_uL10-like_insert_sf"/>
</dbReference>
<dbReference type="InterPro" id="IPR043141">
    <property type="entry name" value="Ribosomal_uL10-like_sf"/>
</dbReference>
<dbReference type="InterPro" id="IPR022909">
    <property type="entry name" value="Ribosomal_uL10_arc"/>
</dbReference>
<dbReference type="NCBIfam" id="NF003095">
    <property type="entry name" value="PRK04019.1-1"/>
    <property type="match status" value="1"/>
</dbReference>
<dbReference type="PANTHER" id="PTHR45699">
    <property type="entry name" value="60S ACIDIC RIBOSOMAL PROTEIN P0"/>
    <property type="match status" value="1"/>
</dbReference>
<dbReference type="PANTHER" id="PTHR45699:SF3">
    <property type="entry name" value="LARGE RIBOSOMAL SUBUNIT PROTEIN UL10"/>
    <property type="match status" value="1"/>
</dbReference>
<dbReference type="Pfam" id="PF00466">
    <property type="entry name" value="Ribosomal_L10"/>
    <property type="match status" value="1"/>
</dbReference>
<dbReference type="Pfam" id="PF17777">
    <property type="entry name" value="RL10P_insert"/>
    <property type="match status" value="1"/>
</dbReference>
<dbReference type="SUPFAM" id="SSF160369">
    <property type="entry name" value="Ribosomal protein L10-like"/>
    <property type="match status" value="1"/>
</dbReference>
<feature type="chain" id="PRO_0000154787" description="Large ribosomal subunit protein uL10">
    <location>
        <begin position="1"/>
        <end position="341"/>
    </location>
</feature>
<feature type="region of interest" description="Disordered" evidence="2">
    <location>
        <begin position="301"/>
        <end position="341"/>
    </location>
</feature>
<accession>Q9Y9W8</accession>
<reference key="1">
    <citation type="journal article" date="1999" name="DNA Res.">
        <title>Complete genome sequence of an aerobic hyper-thermophilic crenarchaeon, Aeropyrum pernix K1.</title>
        <authorList>
            <person name="Kawarabayasi Y."/>
            <person name="Hino Y."/>
            <person name="Horikawa H."/>
            <person name="Yamazaki S."/>
            <person name="Haikawa Y."/>
            <person name="Jin-no K."/>
            <person name="Takahashi M."/>
            <person name="Sekine M."/>
            <person name="Baba S."/>
            <person name="Ankai A."/>
            <person name="Kosugi H."/>
            <person name="Hosoyama A."/>
            <person name="Fukui S."/>
            <person name="Nagai Y."/>
            <person name="Nishijima K."/>
            <person name="Nakazawa H."/>
            <person name="Takamiya M."/>
            <person name="Masuda S."/>
            <person name="Funahashi T."/>
            <person name="Tanaka T."/>
            <person name="Kudoh Y."/>
            <person name="Yamazaki J."/>
            <person name="Kushida N."/>
            <person name="Oguchi A."/>
            <person name="Aoki K."/>
            <person name="Kubota K."/>
            <person name="Nakamura Y."/>
            <person name="Nomura N."/>
            <person name="Sako Y."/>
            <person name="Kikuchi H."/>
        </authorList>
    </citation>
    <scope>NUCLEOTIDE SEQUENCE [LARGE SCALE GENOMIC DNA]</scope>
    <source>
        <strain>ATCC 700893 / DSM 11879 / JCM 9820 / NBRC 100138 / K1</strain>
    </source>
</reference>
<gene>
    <name evidence="1" type="primary">rpl10</name>
    <name evidence="1" type="synonym">rplP0</name>
    <name type="ordered locus">APE_2171.1</name>
</gene>
<name>RL10_AERPE</name>